<keyword id="KW-0007">Acetylation</keyword>
<keyword id="KW-0106">Calcium</keyword>
<keyword id="KW-0148">Chlorophyll</keyword>
<keyword id="KW-0150">Chloroplast</keyword>
<keyword id="KW-0157">Chromophore</keyword>
<keyword id="KW-0249">Electron transport</keyword>
<keyword id="KW-0359">Herbicide resistance</keyword>
<keyword id="KW-0408">Iron</keyword>
<keyword id="KW-0460">Magnesium</keyword>
<keyword id="KW-0464">Manganese</keyword>
<keyword id="KW-0472">Membrane</keyword>
<keyword id="KW-0479">Metal-binding</keyword>
<keyword id="KW-0560">Oxidoreductase</keyword>
<keyword id="KW-0597">Phosphoprotein</keyword>
<keyword id="KW-0602">Photosynthesis</keyword>
<keyword id="KW-0604">Photosystem II</keyword>
<keyword id="KW-0934">Plastid</keyword>
<keyword id="KW-0793">Thylakoid</keyword>
<keyword id="KW-0812">Transmembrane</keyword>
<keyword id="KW-1133">Transmembrane helix</keyword>
<keyword id="KW-0813">Transport</keyword>
<feature type="initiator methionine" description="Removed" evidence="1">
    <location>
        <position position="1"/>
    </location>
</feature>
<feature type="chain" id="PRO_0000340009" description="Photosystem II protein D1" evidence="2">
    <location>
        <begin position="2"/>
        <end position="344"/>
    </location>
</feature>
<feature type="propeptide" id="PRO_0000340010" evidence="2">
    <location>
        <begin position="345"/>
        <end position="353"/>
    </location>
</feature>
<feature type="transmembrane region" description="Helical" evidence="2">
    <location>
        <begin position="29"/>
        <end position="46"/>
    </location>
</feature>
<feature type="transmembrane region" description="Helical" evidence="2">
    <location>
        <begin position="118"/>
        <end position="133"/>
    </location>
</feature>
<feature type="transmembrane region" description="Helical" evidence="2">
    <location>
        <begin position="142"/>
        <end position="156"/>
    </location>
</feature>
<feature type="transmembrane region" description="Helical" evidence="2">
    <location>
        <begin position="197"/>
        <end position="218"/>
    </location>
</feature>
<feature type="transmembrane region" description="Helical" evidence="2">
    <location>
        <begin position="274"/>
        <end position="288"/>
    </location>
</feature>
<feature type="binding site" description="axial binding residue" evidence="2">
    <location>
        <position position="118"/>
    </location>
    <ligand>
        <name>chlorophyll a</name>
        <dbReference type="ChEBI" id="CHEBI:58416"/>
        <label>ChlzD1</label>
    </ligand>
    <ligandPart>
        <name>Mg</name>
        <dbReference type="ChEBI" id="CHEBI:25107"/>
    </ligandPart>
</feature>
<feature type="binding site" evidence="2">
    <location>
        <position position="126"/>
    </location>
    <ligand>
        <name>pheophytin a</name>
        <dbReference type="ChEBI" id="CHEBI:136840"/>
        <label>D1</label>
    </ligand>
</feature>
<feature type="binding site" evidence="2">
    <location>
        <position position="170"/>
    </location>
    <ligand>
        <name>[CaMn4O5] cluster</name>
        <dbReference type="ChEBI" id="CHEBI:189552"/>
    </ligand>
</feature>
<feature type="binding site" evidence="2">
    <location>
        <position position="189"/>
    </location>
    <ligand>
        <name>[CaMn4O5] cluster</name>
        <dbReference type="ChEBI" id="CHEBI:189552"/>
    </ligand>
</feature>
<feature type="binding site" description="axial binding residue" evidence="2">
    <location>
        <position position="198"/>
    </location>
    <ligand>
        <name>chlorophyll a</name>
        <dbReference type="ChEBI" id="CHEBI:58416"/>
        <label>PD1</label>
    </ligand>
    <ligandPart>
        <name>Mg</name>
        <dbReference type="ChEBI" id="CHEBI:25107"/>
    </ligandPart>
</feature>
<feature type="binding site" evidence="2">
    <location>
        <position position="215"/>
    </location>
    <ligand>
        <name>a quinone</name>
        <dbReference type="ChEBI" id="CHEBI:132124"/>
        <label>B</label>
    </ligand>
</feature>
<feature type="binding site" evidence="2">
    <location>
        <position position="215"/>
    </location>
    <ligand>
        <name>Fe cation</name>
        <dbReference type="ChEBI" id="CHEBI:24875"/>
        <note>ligand shared with heterodimeric partner</note>
    </ligand>
</feature>
<feature type="binding site" evidence="2">
    <location>
        <begin position="264"/>
        <end position="265"/>
    </location>
    <ligand>
        <name>a quinone</name>
        <dbReference type="ChEBI" id="CHEBI:132124"/>
        <label>B</label>
    </ligand>
</feature>
<feature type="binding site" evidence="2">
    <location>
        <position position="272"/>
    </location>
    <ligand>
        <name>Fe cation</name>
        <dbReference type="ChEBI" id="CHEBI:24875"/>
        <note>ligand shared with heterodimeric partner</note>
    </ligand>
</feature>
<feature type="binding site" evidence="2">
    <location>
        <position position="332"/>
    </location>
    <ligand>
        <name>[CaMn4O5] cluster</name>
        <dbReference type="ChEBI" id="CHEBI:189552"/>
    </ligand>
</feature>
<feature type="binding site" evidence="2">
    <location>
        <position position="333"/>
    </location>
    <ligand>
        <name>[CaMn4O5] cluster</name>
        <dbReference type="ChEBI" id="CHEBI:189552"/>
    </ligand>
</feature>
<feature type="binding site" evidence="2">
    <location>
        <position position="342"/>
    </location>
    <ligand>
        <name>[CaMn4O5] cluster</name>
        <dbReference type="ChEBI" id="CHEBI:189552"/>
    </ligand>
</feature>
<feature type="binding site" evidence="2">
    <location>
        <position position="344"/>
    </location>
    <ligand>
        <name>[CaMn4O5] cluster</name>
        <dbReference type="ChEBI" id="CHEBI:189552"/>
    </ligand>
</feature>
<feature type="site" description="Tyrosine radical intermediate" evidence="2">
    <location>
        <position position="161"/>
    </location>
</feature>
<feature type="site" description="Stabilizes free radical intermediate" evidence="2">
    <location>
        <position position="190"/>
    </location>
</feature>
<feature type="site" description="Cleavage; by CTPA" evidence="2">
    <location>
        <begin position="344"/>
        <end position="345"/>
    </location>
</feature>
<feature type="modified residue" description="N-acetylthreonine" evidence="1 2">
    <location>
        <position position="2"/>
    </location>
</feature>
<feature type="modified residue" description="Phosphothreonine" evidence="1 2">
    <location>
        <position position="2"/>
    </location>
</feature>
<proteinExistence type="inferred from homology"/>
<gene>
    <name evidence="2" type="primary">psbA</name>
</gene>
<dbReference type="EC" id="1.10.3.9" evidence="2"/>
<dbReference type="EMBL" id="AP009374">
    <property type="protein sequence ID" value="BAF50441.1"/>
    <property type="molecule type" value="Genomic_DNA"/>
</dbReference>
<dbReference type="RefSeq" id="YP_001123617.1">
    <property type="nucleotide sequence ID" value="NC_009273.1"/>
</dbReference>
<dbReference type="SMR" id="A4QL86"/>
<dbReference type="GeneID" id="4962047"/>
<dbReference type="GO" id="GO:0009535">
    <property type="term" value="C:chloroplast thylakoid membrane"/>
    <property type="evidence" value="ECO:0007669"/>
    <property type="project" value="UniProtKB-SubCell"/>
</dbReference>
<dbReference type="GO" id="GO:0009523">
    <property type="term" value="C:photosystem II"/>
    <property type="evidence" value="ECO:0007669"/>
    <property type="project" value="UniProtKB-KW"/>
</dbReference>
<dbReference type="GO" id="GO:0016168">
    <property type="term" value="F:chlorophyll binding"/>
    <property type="evidence" value="ECO:0007669"/>
    <property type="project" value="UniProtKB-UniRule"/>
</dbReference>
<dbReference type="GO" id="GO:0045156">
    <property type="term" value="F:electron transporter, transferring electrons within the cyclic electron transport pathway of photosynthesis activity"/>
    <property type="evidence" value="ECO:0007669"/>
    <property type="project" value="InterPro"/>
</dbReference>
<dbReference type="GO" id="GO:0005506">
    <property type="term" value="F:iron ion binding"/>
    <property type="evidence" value="ECO:0007669"/>
    <property type="project" value="UniProtKB-UniRule"/>
</dbReference>
<dbReference type="GO" id="GO:0016682">
    <property type="term" value="F:oxidoreductase activity, acting on diphenols and related substances as donors, oxygen as acceptor"/>
    <property type="evidence" value="ECO:0007669"/>
    <property type="project" value="UniProtKB-UniRule"/>
</dbReference>
<dbReference type="GO" id="GO:0010242">
    <property type="term" value="F:oxygen evolving activity"/>
    <property type="evidence" value="ECO:0007669"/>
    <property type="project" value="UniProtKB-EC"/>
</dbReference>
<dbReference type="GO" id="GO:0009772">
    <property type="term" value="P:photosynthetic electron transport in photosystem II"/>
    <property type="evidence" value="ECO:0007669"/>
    <property type="project" value="InterPro"/>
</dbReference>
<dbReference type="GO" id="GO:0009635">
    <property type="term" value="P:response to herbicide"/>
    <property type="evidence" value="ECO:0007669"/>
    <property type="project" value="UniProtKB-KW"/>
</dbReference>
<dbReference type="CDD" id="cd09289">
    <property type="entry name" value="Photosystem-II_D1"/>
    <property type="match status" value="1"/>
</dbReference>
<dbReference type="FunFam" id="1.20.85.10:FF:000002">
    <property type="entry name" value="Photosystem II protein D1"/>
    <property type="match status" value="1"/>
</dbReference>
<dbReference type="Gene3D" id="1.20.85.10">
    <property type="entry name" value="Photosystem II protein D1-like"/>
    <property type="match status" value="1"/>
</dbReference>
<dbReference type="HAMAP" id="MF_01379">
    <property type="entry name" value="PSII_PsbA_D1"/>
    <property type="match status" value="1"/>
</dbReference>
<dbReference type="InterPro" id="IPR055266">
    <property type="entry name" value="D1/D2"/>
</dbReference>
<dbReference type="InterPro" id="IPR036854">
    <property type="entry name" value="Photo_II_D1/D2_sf"/>
</dbReference>
<dbReference type="InterPro" id="IPR000484">
    <property type="entry name" value="Photo_RC_L/M"/>
</dbReference>
<dbReference type="InterPro" id="IPR055265">
    <property type="entry name" value="Photo_RC_L/M_CS"/>
</dbReference>
<dbReference type="InterPro" id="IPR005867">
    <property type="entry name" value="PSII_D1"/>
</dbReference>
<dbReference type="NCBIfam" id="TIGR01151">
    <property type="entry name" value="psbA"/>
    <property type="match status" value="1"/>
</dbReference>
<dbReference type="PANTHER" id="PTHR33149">
    <property type="entry name" value="PHOTOSYSTEM II PROTEIN D1"/>
    <property type="match status" value="1"/>
</dbReference>
<dbReference type="PANTHER" id="PTHR33149:SF55">
    <property type="entry name" value="PHOTOSYSTEM II PROTEIN D1"/>
    <property type="match status" value="1"/>
</dbReference>
<dbReference type="Pfam" id="PF00124">
    <property type="entry name" value="Photo_RC"/>
    <property type="match status" value="1"/>
</dbReference>
<dbReference type="PRINTS" id="PR00256">
    <property type="entry name" value="REACTNCENTRE"/>
</dbReference>
<dbReference type="SUPFAM" id="SSF81483">
    <property type="entry name" value="Bacterial photosystem II reaction centre, L and M subunits"/>
    <property type="match status" value="1"/>
</dbReference>
<dbReference type="PROSITE" id="PS00244">
    <property type="entry name" value="REACTION_CENTER"/>
    <property type="match status" value="1"/>
</dbReference>
<protein>
    <recommendedName>
        <fullName evidence="2">Photosystem II protein D1</fullName>
        <shortName evidence="2">PSII D1 protein</shortName>
        <ecNumber evidence="2">1.10.3.9</ecNumber>
    </recommendedName>
    <alternativeName>
        <fullName evidence="2">Photosystem II Q(B) protein</fullName>
    </alternativeName>
</protein>
<name>PSBA_LEPVR</name>
<organism>
    <name type="scientific">Lepidium virginicum</name>
    <name type="common">Virginia pepperweed</name>
    <dbReference type="NCBI Taxonomy" id="59292"/>
    <lineage>
        <taxon>Eukaryota</taxon>
        <taxon>Viridiplantae</taxon>
        <taxon>Streptophyta</taxon>
        <taxon>Embryophyta</taxon>
        <taxon>Tracheophyta</taxon>
        <taxon>Spermatophyta</taxon>
        <taxon>Magnoliopsida</taxon>
        <taxon>eudicotyledons</taxon>
        <taxon>Gunneridae</taxon>
        <taxon>Pentapetalae</taxon>
        <taxon>rosids</taxon>
        <taxon>malvids</taxon>
        <taxon>Brassicales</taxon>
        <taxon>Brassicaceae</taxon>
        <taxon>Lepidieae</taxon>
        <taxon>Lepidium</taxon>
    </lineage>
</organism>
<sequence length="353" mass="38951">MTAILERRETESLWGRFCNWITSTENRLYIGWFGVLMIPTLLTATSVFIIAFIAAPPVDIDGIREPVSGSLLYGNNIISGAIIPTSAAIGLHFYPIWEAASVDEWLYNGGPYELIVLHFLLGVACYMGREWELSFRLGMRPWIAVAYSAPVAAATAVFLIYPIGQGSFSDGMPLGISGTFNFMIVFQAEHNILMHPFHMLGVAGVFGGSLFSAMHGSLVTSSLIRETTENESANEGYRFGQEEETYNIVAAHGYFGRLIFQYASFNNSRSLHFFLAAWPVVGIWFTALGISTMAFNLNGFNFNQSVVDSQGRVINTWADIINRANLGMEVMHERNAHNFPLDLAAVEAPSTNG</sequence>
<reference key="1">
    <citation type="submission" date="2007-03" db="EMBL/GenBank/DDBJ databases">
        <title>Sequencing analysis of Lepidium virginicum JO26 chloroplast DNA.</title>
        <authorList>
            <person name="Hosouchi T."/>
            <person name="Tsuruoka H."/>
            <person name="Kotani H."/>
        </authorList>
    </citation>
    <scope>NUCLEOTIDE SEQUENCE [LARGE SCALE GENOMIC DNA]</scope>
</reference>
<geneLocation type="chloroplast"/>
<comment type="function">
    <text evidence="2">Photosystem II (PSII) is a light-driven water:plastoquinone oxidoreductase that uses light energy to abstract electrons from H(2)O, generating O(2) and a proton gradient subsequently used for ATP formation. It consists of a core antenna complex that captures photons, and an electron transfer chain that converts photonic excitation into a charge separation. The D1/D2 (PsbA/PsbD) reaction center heterodimer binds P680, the primary electron donor of PSII as well as several subsequent electron acceptors.</text>
</comment>
<comment type="catalytic activity">
    <reaction evidence="2">
        <text>2 a plastoquinone + 4 hnu + 2 H2O = 2 a plastoquinol + O2</text>
        <dbReference type="Rhea" id="RHEA:36359"/>
        <dbReference type="Rhea" id="RHEA-COMP:9561"/>
        <dbReference type="Rhea" id="RHEA-COMP:9562"/>
        <dbReference type="ChEBI" id="CHEBI:15377"/>
        <dbReference type="ChEBI" id="CHEBI:15379"/>
        <dbReference type="ChEBI" id="CHEBI:17757"/>
        <dbReference type="ChEBI" id="CHEBI:30212"/>
        <dbReference type="ChEBI" id="CHEBI:62192"/>
        <dbReference type="EC" id="1.10.3.9"/>
    </reaction>
</comment>
<comment type="cofactor">
    <text evidence="2">The D1/D2 heterodimer binds P680, chlorophylls that are the primary electron donor of PSII, and subsequent electron acceptors. It shares a non-heme iron and each subunit binds pheophytin, quinone, additional chlorophylls, carotenoids and lipids. D1 provides most of the ligands for the Mn4-Ca-O5 cluster of the oxygen-evolving complex (OEC). There is also a Cl(-1) ion associated with D1 and D2, which is required for oxygen evolution. The PSII complex binds additional chlorophylls, carotenoids and specific lipids.</text>
</comment>
<comment type="subunit">
    <text evidence="2">PSII is composed of 1 copy each of membrane proteins PsbA, PsbB, PsbC, PsbD, PsbE, PsbF, PsbH, PsbI, PsbJ, PsbK, PsbL, PsbM, PsbT, PsbX, PsbY, PsbZ, Psb30/Ycf12, at least 3 peripheral proteins of the oxygen-evolving complex and a large number of cofactors. It forms dimeric complexes.</text>
</comment>
<comment type="subcellular location">
    <subcellularLocation>
        <location evidence="2">Plastid</location>
        <location evidence="2">Chloroplast thylakoid membrane</location>
        <topology evidence="2">Multi-pass membrane protein</topology>
    </subcellularLocation>
</comment>
<comment type="PTM">
    <text evidence="2">Tyr-161 forms a radical intermediate that is referred to as redox-active TyrZ, YZ or Y-Z.</text>
</comment>
<comment type="PTM">
    <text evidence="2">C-terminally processed by CTPA; processing is essential to allow assembly of the oxygen-evolving complex and thus photosynthetic growth.</text>
</comment>
<comment type="miscellaneous">
    <text evidence="2">2 of the reaction center chlorophylls (ChlD1 and ChlD2) are entirely coordinated by water.</text>
</comment>
<comment type="miscellaneous">
    <text evidence="2">Herbicides such as atrazine, BNT, diuron or ioxynil bind in the Q(B) binding site and block subsequent electron transfer.</text>
</comment>
<comment type="similarity">
    <text evidence="2">Belongs to the reaction center PufL/M/PsbA/D family.</text>
</comment>
<accession>A4QL86</accession>
<evidence type="ECO:0000250" key="1">
    <source>
        <dbReference type="UniProtKB" id="P83755"/>
    </source>
</evidence>
<evidence type="ECO:0000255" key="2">
    <source>
        <dbReference type="HAMAP-Rule" id="MF_01379"/>
    </source>
</evidence>